<name>Y660_RICB8</name>
<accession>A8GU86</accession>
<organism>
    <name type="scientific">Rickettsia bellii (strain OSU 85-389)</name>
    <dbReference type="NCBI Taxonomy" id="391896"/>
    <lineage>
        <taxon>Bacteria</taxon>
        <taxon>Pseudomonadati</taxon>
        <taxon>Pseudomonadota</taxon>
        <taxon>Alphaproteobacteria</taxon>
        <taxon>Rickettsiales</taxon>
        <taxon>Rickettsiaceae</taxon>
        <taxon>Rickettsieae</taxon>
        <taxon>Rickettsia</taxon>
        <taxon>belli group</taxon>
    </lineage>
</organism>
<proteinExistence type="inferred from homology"/>
<evidence type="ECO:0000255" key="1">
    <source>
        <dbReference type="HAMAP-Rule" id="MF_00274"/>
    </source>
</evidence>
<evidence type="ECO:0000256" key="2">
    <source>
        <dbReference type="SAM" id="MobiDB-lite"/>
    </source>
</evidence>
<reference key="1">
    <citation type="submission" date="2007-09" db="EMBL/GenBank/DDBJ databases">
        <title>Complete genome sequencing of Rickettsia bellii.</title>
        <authorList>
            <person name="Madan A."/>
            <person name="Lee H."/>
            <person name="Madan A."/>
            <person name="Yoon J.-G."/>
            <person name="Ryu G.-Y."/>
            <person name="Dasch G."/>
            <person name="Ereemeva M."/>
        </authorList>
    </citation>
    <scope>NUCLEOTIDE SEQUENCE [LARGE SCALE GENOMIC DNA]</scope>
    <source>
        <strain>OSU 85-389</strain>
    </source>
</reference>
<feature type="chain" id="PRO_1000003814" description="Nucleoid-associated protein A1I_00660">
    <location>
        <begin position="1"/>
        <end position="107"/>
    </location>
</feature>
<feature type="region of interest" description="Disordered" evidence="2">
    <location>
        <begin position="81"/>
        <end position="107"/>
    </location>
</feature>
<keyword id="KW-0963">Cytoplasm</keyword>
<keyword id="KW-0238">DNA-binding</keyword>
<sequence length="107" mass="11753">MVNFNQFLKQAQTMQKKMQEAQEQMANTRYTGKAGGGLVEIIATGKGEVEKVSIDASLLKEEEKEMLEDLIKVAFNDAKQKCDSDSQNSMSGALSGMSLPPGFKMPF</sequence>
<comment type="function">
    <text evidence="1">Binds to DNA and alters its conformation. May be involved in regulation of gene expression, nucleoid organization and DNA protection.</text>
</comment>
<comment type="subunit">
    <text evidence="1">Homodimer.</text>
</comment>
<comment type="subcellular location">
    <subcellularLocation>
        <location evidence="1">Cytoplasm</location>
        <location evidence="1">Nucleoid</location>
    </subcellularLocation>
</comment>
<comment type="similarity">
    <text evidence="1">Belongs to the YbaB/EbfC family.</text>
</comment>
<dbReference type="EMBL" id="CP000849">
    <property type="protein sequence ID" value="ABV78532.1"/>
    <property type="molecule type" value="Genomic_DNA"/>
</dbReference>
<dbReference type="RefSeq" id="WP_012151538.1">
    <property type="nucleotide sequence ID" value="NC_009883.1"/>
</dbReference>
<dbReference type="SMR" id="A8GU86"/>
<dbReference type="KEGG" id="rbo:A1I_00660"/>
<dbReference type="HOGENOM" id="CLU_140930_0_0_5"/>
<dbReference type="GO" id="GO:0043590">
    <property type="term" value="C:bacterial nucleoid"/>
    <property type="evidence" value="ECO:0007669"/>
    <property type="project" value="UniProtKB-UniRule"/>
</dbReference>
<dbReference type="GO" id="GO:0005829">
    <property type="term" value="C:cytosol"/>
    <property type="evidence" value="ECO:0007669"/>
    <property type="project" value="TreeGrafter"/>
</dbReference>
<dbReference type="GO" id="GO:0003677">
    <property type="term" value="F:DNA binding"/>
    <property type="evidence" value="ECO:0007669"/>
    <property type="project" value="UniProtKB-UniRule"/>
</dbReference>
<dbReference type="Gene3D" id="3.30.1310.10">
    <property type="entry name" value="Nucleoid-associated protein YbaB-like domain"/>
    <property type="match status" value="1"/>
</dbReference>
<dbReference type="HAMAP" id="MF_00274">
    <property type="entry name" value="DNA_YbaB_EbfC"/>
    <property type="match status" value="1"/>
</dbReference>
<dbReference type="InterPro" id="IPR036894">
    <property type="entry name" value="YbaB-like_sf"/>
</dbReference>
<dbReference type="InterPro" id="IPR004401">
    <property type="entry name" value="YbaB/EbfC"/>
</dbReference>
<dbReference type="NCBIfam" id="TIGR00103">
    <property type="entry name" value="DNA_YbaB_EbfC"/>
    <property type="match status" value="1"/>
</dbReference>
<dbReference type="PANTHER" id="PTHR33449">
    <property type="entry name" value="NUCLEOID-ASSOCIATED PROTEIN YBAB"/>
    <property type="match status" value="1"/>
</dbReference>
<dbReference type="PANTHER" id="PTHR33449:SF1">
    <property type="entry name" value="NUCLEOID-ASSOCIATED PROTEIN YBAB"/>
    <property type="match status" value="1"/>
</dbReference>
<dbReference type="Pfam" id="PF02575">
    <property type="entry name" value="YbaB_DNA_bd"/>
    <property type="match status" value="1"/>
</dbReference>
<dbReference type="PIRSF" id="PIRSF004555">
    <property type="entry name" value="UCP004555"/>
    <property type="match status" value="1"/>
</dbReference>
<dbReference type="SUPFAM" id="SSF82607">
    <property type="entry name" value="YbaB-like"/>
    <property type="match status" value="1"/>
</dbReference>
<protein>
    <recommendedName>
        <fullName evidence="1">Nucleoid-associated protein A1I_00660</fullName>
    </recommendedName>
</protein>
<gene>
    <name type="ordered locus">A1I_00660</name>
</gene>